<keyword id="KW-0276">Fatty acid metabolism</keyword>
<keyword id="KW-0413">Isomerase</keyword>
<keyword id="KW-0442">Lipid degradation</keyword>
<keyword id="KW-0443">Lipid metabolism</keyword>
<keyword id="KW-0456">Lyase</keyword>
<keyword id="KW-0511">Multifunctional enzyme</keyword>
<keyword id="KW-0520">NAD</keyword>
<keyword id="KW-0560">Oxidoreductase</keyword>
<organism>
    <name type="scientific">Vibrio parahaemolyticus serotype O3:K6 (strain RIMD 2210633)</name>
    <dbReference type="NCBI Taxonomy" id="223926"/>
    <lineage>
        <taxon>Bacteria</taxon>
        <taxon>Pseudomonadati</taxon>
        <taxon>Pseudomonadota</taxon>
        <taxon>Gammaproteobacteria</taxon>
        <taxon>Vibrionales</taxon>
        <taxon>Vibrionaceae</taxon>
        <taxon>Vibrio</taxon>
    </lineage>
</organism>
<reference key="1">
    <citation type="journal article" date="2003" name="Lancet">
        <title>Genome sequence of Vibrio parahaemolyticus: a pathogenic mechanism distinct from that of V. cholerae.</title>
        <authorList>
            <person name="Makino K."/>
            <person name="Oshima K."/>
            <person name="Kurokawa K."/>
            <person name="Yokoyama K."/>
            <person name="Uda T."/>
            <person name="Tagomori K."/>
            <person name="Iijima Y."/>
            <person name="Najima M."/>
            <person name="Nakano M."/>
            <person name="Yamashita A."/>
            <person name="Kubota Y."/>
            <person name="Kimura S."/>
            <person name="Yasunaga T."/>
            <person name="Honda T."/>
            <person name="Shinagawa H."/>
            <person name="Hattori M."/>
            <person name="Iida T."/>
        </authorList>
    </citation>
    <scope>NUCLEOTIDE SEQUENCE [LARGE SCALE GENOMIC DNA]</scope>
    <source>
        <strain>RIMD 2210633</strain>
    </source>
</reference>
<evidence type="ECO:0000255" key="1">
    <source>
        <dbReference type="HAMAP-Rule" id="MF_01621"/>
    </source>
</evidence>
<sequence>MIYQADTLQVKEIQDGIAELSFCSPKSVNKLDLATLESLDKALDALTSHQGLKGLMLTSDKDAFIVGADITEFLGLFAKTDAELDQWLQFANSIFNKLEDLPVPTISVLKGHTLGGGCECVLATDMRIGDKTTSIGLPETKLGIMPGFGGCVRLPRVIGADSAMEIITQGKACRADEALKIGLLDAVVETDALYESALQTLTSAINEKIDWQARRKQKTSPLTLSKLESMMSFTMAKGLVAQVAGPHYPAPMTAVITIEEGARFARNEALDIERKYFVKLAKSEEAKALVGLFLNDQYIKGIAKKAAKSASKDTERAAVLGAGIMGGGIAYQSALKGVPVLMKDIAQPSLDLGMTEASKLLNKRLAQGRIDGFKMAGILASITPSLHYAGIENSDVIVEAVVENPKVKATVLSEVESHVGEDTVITSNTSTIPINLLAQSLKRPENFCGMHFFNPVHRMPLVEIIRGEKTSDETINRVVAYAAKMGKSPIVVNDCPGFFVNRVLFPYFGGFSMLLRDGADFTKVDKVMERKFGWPMGPAYLLDVVGIDTAHHAQAVMAEGFPERMGKQGRDAIDALFEANKYGQKNGNGFYSYTIDKKGKPKKTFTEDILPVLADVCADKQEFDEQTIIQRMMIPMINEVVLCLQEGIIATPQEADMALVYGLGFPPFRGGVFRYLDSVGIAEFVEMAKQHADLGAMYHVPQMLIDMAAKGESFYGAQQQGSI</sequence>
<comment type="function">
    <text evidence="1">Involved in the aerobic and anaerobic degradation of long-chain fatty acids via beta-oxidation cycle. Catalyzes the formation of 3-oxoacyl-CoA from enoyl-CoA via L-3-hydroxyacyl-CoA. It can also use D-3-hydroxyacyl-CoA and cis-3-enoyl-CoA as substrate.</text>
</comment>
<comment type="catalytic activity">
    <reaction evidence="1">
        <text>a (3S)-3-hydroxyacyl-CoA + NAD(+) = a 3-oxoacyl-CoA + NADH + H(+)</text>
        <dbReference type="Rhea" id="RHEA:22432"/>
        <dbReference type="ChEBI" id="CHEBI:15378"/>
        <dbReference type="ChEBI" id="CHEBI:57318"/>
        <dbReference type="ChEBI" id="CHEBI:57540"/>
        <dbReference type="ChEBI" id="CHEBI:57945"/>
        <dbReference type="ChEBI" id="CHEBI:90726"/>
        <dbReference type="EC" id="1.1.1.35"/>
    </reaction>
</comment>
<comment type="catalytic activity">
    <reaction evidence="1">
        <text>a (3S)-3-hydroxyacyl-CoA = a (2E)-enoyl-CoA + H2O</text>
        <dbReference type="Rhea" id="RHEA:16105"/>
        <dbReference type="ChEBI" id="CHEBI:15377"/>
        <dbReference type="ChEBI" id="CHEBI:57318"/>
        <dbReference type="ChEBI" id="CHEBI:58856"/>
        <dbReference type="EC" id="4.2.1.17"/>
    </reaction>
</comment>
<comment type="catalytic activity">
    <reaction evidence="1">
        <text>a 4-saturated-(3S)-3-hydroxyacyl-CoA = a (3E)-enoyl-CoA + H2O</text>
        <dbReference type="Rhea" id="RHEA:20724"/>
        <dbReference type="ChEBI" id="CHEBI:15377"/>
        <dbReference type="ChEBI" id="CHEBI:58521"/>
        <dbReference type="ChEBI" id="CHEBI:137480"/>
        <dbReference type="EC" id="4.2.1.17"/>
    </reaction>
</comment>
<comment type="catalytic activity">
    <reaction evidence="1">
        <text>(3S)-3-hydroxybutanoyl-CoA = (3R)-3-hydroxybutanoyl-CoA</text>
        <dbReference type="Rhea" id="RHEA:21760"/>
        <dbReference type="ChEBI" id="CHEBI:57315"/>
        <dbReference type="ChEBI" id="CHEBI:57316"/>
        <dbReference type="EC" id="5.1.2.3"/>
    </reaction>
</comment>
<comment type="catalytic activity">
    <reaction evidence="1">
        <text>a (3Z)-enoyl-CoA = a 4-saturated (2E)-enoyl-CoA</text>
        <dbReference type="Rhea" id="RHEA:45900"/>
        <dbReference type="ChEBI" id="CHEBI:85097"/>
        <dbReference type="ChEBI" id="CHEBI:85489"/>
        <dbReference type="EC" id="5.3.3.8"/>
    </reaction>
</comment>
<comment type="catalytic activity">
    <reaction evidence="1">
        <text>a (3E)-enoyl-CoA = a 4-saturated (2E)-enoyl-CoA</text>
        <dbReference type="Rhea" id="RHEA:45228"/>
        <dbReference type="ChEBI" id="CHEBI:58521"/>
        <dbReference type="ChEBI" id="CHEBI:85097"/>
        <dbReference type="EC" id="5.3.3.8"/>
    </reaction>
</comment>
<comment type="pathway">
    <text evidence="1">Lipid metabolism; fatty acid beta-oxidation.</text>
</comment>
<comment type="subunit">
    <text evidence="1">Heterotetramer of two alpha chains (FadB) and two beta chains (FadA).</text>
</comment>
<comment type="similarity">
    <text evidence="1">In the N-terminal section; belongs to the enoyl-CoA hydratase/isomerase family.</text>
</comment>
<comment type="similarity">
    <text evidence="1">In the C-terminal section; belongs to the 3-hydroxyacyl-CoA dehydrogenase family.</text>
</comment>
<protein>
    <recommendedName>
        <fullName evidence="1">Fatty acid oxidation complex subunit alpha</fullName>
    </recommendedName>
    <domain>
        <recommendedName>
            <fullName evidence="1">Enoyl-CoA hydratase/Delta(3)-cis-Delta(2)-trans-enoyl-CoA isomerase/3-hydroxybutyryl-CoA epimerase</fullName>
            <ecNumber evidence="1">4.2.1.17</ecNumber>
            <ecNumber evidence="1">5.1.2.3</ecNumber>
            <ecNumber evidence="1">5.3.3.8</ecNumber>
        </recommendedName>
    </domain>
    <domain>
        <recommendedName>
            <fullName evidence="1">3-hydroxyacyl-CoA dehydrogenase</fullName>
            <ecNumber evidence="1">1.1.1.35</ecNumber>
        </recommendedName>
    </domain>
</protein>
<gene>
    <name evidence="1" type="primary">fadB</name>
    <name type="ordered locus">VP0030</name>
</gene>
<name>FADB_VIBPA</name>
<accession>Q87TN9</accession>
<proteinExistence type="inferred from homology"/>
<dbReference type="EC" id="4.2.1.17" evidence="1"/>
<dbReference type="EC" id="5.1.2.3" evidence="1"/>
<dbReference type="EC" id="5.3.3.8" evidence="1"/>
<dbReference type="EC" id="1.1.1.35" evidence="1"/>
<dbReference type="EMBL" id="BA000031">
    <property type="protein sequence ID" value="BAC58293.1"/>
    <property type="molecule type" value="Genomic_DNA"/>
</dbReference>
<dbReference type="RefSeq" id="NP_796409.1">
    <property type="nucleotide sequence ID" value="NC_004603.1"/>
</dbReference>
<dbReference type="RefSeq" id="WP_005481023.1">
    <property type="nucleotide sequence ID" value="NC_004603.1"/>
</dbReference>
<dbReference type="SMR" id="Q87TN9"/>
<dbReference type="GeneID" id="1187486"/>
<dbReference type="KEGG" id="vpa:VP0030"/>
<dbReference type="PATRIC" id="fig|223926.6.peg.30"/>
<dbReference type="eggNOG" id="COG1024">
    <property type="taxonomic scope" value="Bacteria"/>
</dbReference>
<dbReference type="eggNOG" id="COG1250">
    <property type="taxonomic scope" value="Bacteria"/>
</dbReference>
<dbReference type="HOGENOM" id="CLU_009834_16_3_6"/>
<dbReference type="UniPathway" id="UPA00659"/>
<dbReference type="Proteomes" id="UP000002493">
    <property type="component" value="Chromosome 1"/>
</dbReference>
<dbReference type="GO" id="GO:0036125">
    <property type="term" value="C:fatty acid beta-oxidation multienzyme complex"/>
    <property type="evidence" value="ECO:0007669"/>
    <property type="project" value="InterPro"/>
</dbReference>
<dbReference type="GO" id="GO:0008692">
    <property type="term" value="F:3-hydroxybutyryl-CoA epimerase activity"/>
    <property type="evidence" value="ECO:0007669"/>
    <property type="project" value="UniProtKB-UniRule"/>
</dbReference>
<dbReference type="GO" id="GO:0004165">
    <property type="term" value="F:delta(3)-delta(2)-enoyl-CoA isomerase activity"/>
    <property type="evidence" value="ECO:0007669"/>
    <property type="project" value="UniProtKB-UniRule"/>
</dbReference>
<dbReference type="GO" id="GO:0004300">
    <property type="term" value="F:enoyl-CoA hydratase activity"/>
    <property type="evidence" value="ECO:0007669"/>
    <property type="project" value="UniProtKB-UniRule"/>
</dbReference>
<dbReference type="GO" id="GO:0016509">
    <property type="term" value="F:long-chain-3-hydroxyacyl-CoA dehydrogenase activity"/>
    <property type="evidence" value="ECO:0007669"/>
    <property type="project" value="TreeGrafter"/>
</dbReference>
<dbReference type="GO" id="GO:0070403">
    <property type="term" value="F:NAD+ binding"/>
    <property type="evidence" value="ECO:0007669"/>
    <property type="project" value="InterPro"/>
</dbReference>
<dbReference type="GO" id="GO:0006635">
    <property type="term" value="P:fatty acid beta-oxidation"/>
    <property type="evidence" value="ECO:0007669"/>
    <property type="project" value="UniProtKB-UniRule"/>
</dbReference>
<dbReference type="CDD" id="cd06558">
    <property type="entry name" value="crotonase-like"/>
    <property type="match status" value="1"/>
</dbReference>
<dbReference type="FunFam" id="1.10.1040.50:FF:000001">
    <property type="entry name" value="Fatty acid oxidation complex subunit alpha"/>
    <property type="match status" value="1"/>
</dbReference>
<dbReference type="FunFam" id="3.40.50.720:FF:000009">
    <property type="entry name" value="Fatty oxidation complex, alpha subunit"/>
    <property type="match status" value="1"/>
</dbReference>
<dbReference type="Gene3D" id="1.10.1040.50">
    <property type="match status" value="1"/>
</dbReference>
<dbReference type="Gene3D" id="3.90.226.10">
    <property type="entry name" value="2-enoyl-CoA Hydratase, Chain A, domain 1"/>
    <property type="match status" value="1"/>
</dbReference>
<dbReference type="Gene3D" id="3.40.50.720">
    <property type="entry name" value="NAD(P)-binding Rossmann-like Domain"/>
    <property type="match status" value="1"/>
</dbReference>
<dbReference type="HAMAP" id="MF_01621">
    <property type="entry name" value="FadB"/>
    <property type="match status" value="1"/>
</dbReference>
<dbReference type="InterPro" id="IPR006180">
    <property type="entry name" value="3-OHacyl-CoA_DH_CS"/>
</dbReference>
<dbReference type="InterPro" id="IPR006176">
    <property type="entry name" value="3-OHacyl-CoA_DH_NAD-bd"/>
</dbReference>
<dbReference type="InterPro" id="IPR006108">
    <property type="entry name" value="3HC_DH_C"/>
</dbReference>
<dbReference type="InterPro" id="IPR008927">
    <property type="entry name" value="6-PGluconate_DH-like_C_sf"/>
</dbReference>
<dbReference type="InterPro" id="IPR029045">
    <property type="entry name" value="ClpP/crotonase-like_dom_sf"/>
</dbReference>
<dbReference type="InterPro" id="IPR001753">
    <property type="entry name" value="Enoyl-CoA_hydra/iso"/>
</dbReference>
<dbReference type="InterPro" id="IPR050136">
    <property type="entry name" value="FA_oxidation_alpha_subunit"/>
</dbReference>
<dbReference type="InterPro" id="IPR012799">
    <property type="entry name" value="FadB"/>
</dbReference>
<dbReference type="InterPro" id="IPR036291">
    <property type="entry name" value="NAD(P)-bd_dom_sf"/>
</dbReference>
<dbReference type="NCBIfam" id="TIGR02437">
    <property type="entry name" value="FadB"/>
    <property type="match status" value="1"/>
</dbReference>
<dbReference type="NCBIfam" id="NF008727">
    <property type="entry name" value="PRK11730.1"/>
    <property type="match status" value="1"/>
</dbReference>
<dbReference type="PANTHER" id="PTHR43612">
    <property type="entry name" value="TRIFUNCTIONAL ENZYME SUBUNIT ALPHA"/>
    <property type="match status" value="1"/>
</dbReference>
<dbReference type="PANTHER" id="PTHR43612:SF3">
    <property type="entry name" value="TRIFUNCTIONAL ENZYME SUBUNIT ALPHA, MITOCHONDRIAL"/>
    <property type="match status" value="1"/>
</dbReference>
<dbReference type="Pfam" id="PF00725">
    <property type="entry name" value="3HCDH"/>
    <property type="match status" value="2"/>
</dbReference>
<dbReference type="Pfam" id="PF02737">
    <property type="entry name" value="3HCDH_N"/>
    <property type="match status" value="1"/>
</dbReference>
<dbReference type="Pfam" id="PF00378">
    <property type="entry name" value="ECH_1"/>
    <property type="match status" value="1"/>
</dbReference>
<dbReference type="SUPFAM" id="SSF48179">
    <property type="entry name" value="6-phosphogluconate dehydrogenase C-terminal domain-like"/>
    <property type="match status" value="2"/>
</dbReference>
<dbReference type="SUPFAM" id="SSF52096">
    <property type="entry name" value="ClpP/crotonase"/>
    <property type="match status" value="1"/>
</dbReference>
<dbReference type="SUPFAM" id="SSF51735">
    <property type="entry name" value="NAD(P)-binding Rossmann-fold domains"/>
    <property type="match status" value="1"/>
</dbReference>
<dbReference type="PROSITE" id="PS00067">
    <property type="entry name" value="3HCDH"/>
    <property type="match status" value="1"/>
</dbReference>
<feature type="chain" id="PRO_0000109292" description="Fatty acid oxidation complex subunit alpha">
    <location>
        <begin position="1"/>
        <end position="723"/>
    </location>
</feature>
<feature type="region of interest" description="Enoyl-CoA hydratase/isomerase" evidence="1">
    <location>
        <begin position="1"/>
        <end position="189"/>
    </location>
</feature>
<feature type="region of interest" description="3-hydroxyacyl-CoA dehydrogenase" evidence="1">
    <location>
        <begin position="311"/>
        <end position="723"/>
    </location>
</feature>
<feature type="active site" description="For 3-hydroxyacyl-CoA dehydrogenase activity" evidence="1">
    <location>
        <position position="451"/>
    </location>
</feature>
<feature type="binding site" evidence="1">
    <location>
        <position position="296"/>
    </location>
    <ligand>
        <name>substrate</name>
    </ligand>
</feature>
<feature type="binding site" evidence="1">
    <location>
        <position position="325"/>
    </location>
    <ligand>
        <name>NAD(+)</name>
        <dbReference type="ChEBI" id="CHEBI:57540"/>
    </ligand>
</feature>
<feature type="binding site" evidence="1">
    <location>
        <position position="344"/>
    </location>
    <ligand>
        <name>NAD(+)</name>
        <dbReference type="ChEBI" id="CHEBI:57540"/>
    </ligand>
</feature>
<feature type="binding site" evidence="1">
    <location>
        <begin position="401"/>
        <end position="403"/>
    </location>
    <ligand>
        <name>NAD(+)</name>
        <dbReference type="ChEBI" id="CHEBI:57540"/>
    </ligand>
</feature>
<feature type="binding site" evidence="1">
    <location>
        <position position="408"/>
    </location>
    <ligand>
        <name>NAD(+)</name>
        <dbReference type="ChEBI" id="CHEBI:57540"/>
    </ligand>
</feature>
<feature type="binding site" evidence="1">
    <location>
        <position position="430"/>
    </location>
    <ligand>
        <name>NAD(+)</name>
        <dbReference type="ChEBI" id="CHEBI:57540"/>
    </ligand>
</feature>
<feature type="binding site" evidence="1">
    <location>
        <position position="454"/>
    </location>
    <ligand>
        <name>NAD(+)</name>
        <dbReference type="ChEBI" id="CHEBI:57540"/>
    </ligand>
</feature>
<feature type="binding site" evidence="1">
    <location>
        <position position="501"/>
    </location>
    <ligand>
        <name>substrate</name>
    </ligand>
</feature>
<feature type="binding site" evidence="1">
    <location>
        <position position="661"/>
    </location>
    <ligand>
        <name>substrate</name>
    </ligand>
</feature>
<feature type="site" description="Important for catalytic activity" evidence="1">
    <location>
        <position position="119"/>
    </location>
</feature>
<feature type="site" description="Important for catalytic activity" evidence="1">
    <location>
        <position position="139"/>
    </location>
</feature>